<accession>Q1LVQ7</accession>
<name>ALX1_DANRE</name>
<feature type="chain" id="PRO_0000433021" description="ALX homeobox protein 1">
    <location>
        <begin position="1"/>
        <end position="320"/>
    </location>
</feature>
<feature type="DNA-binding region" description="Homeobox" evidence="3">
    <location>
        <begin position="120"/>
        <end position="179"/>
    </location>
</feature>
<feature type="region of interest" description="Transactivation domain" evidence="2">
    <location>
        <begin position="180"/>
        <end position="320"/>
    </location>
</feature>
<feature type="short sequence motif" description="OAR" evidence="4">
    <location>
        <begin position="300"/>
        <end position="313"/>
    </location>
</feature>
<sequence>MEYLSDKFSLKSPAIKGSDYYMDQVMDTLDNVQYYNKASPKCVQAFPMQSNDQHSSMDRSSPCDNQSSVTYCAPKSEESSLHAMENCCSLRVSPATSGPDKTDLDELGEKCDSNVSSSKKRRHRTTFTSAQLEELEKVFQKTHYPDVYVREQLAMRTELTEARVQVWFQNRRAKWRKRERYGQIQQAKSHFAATYDISMLPRTDSYSQISNNLWTGPSAGSSVVSSCMIPRGSPPCVTSPYPHSPRAAEHGYVGFPNHQQNQFGVNHVSLNNFFADSLLASSANSHAAFETKPEFERRSSSIAVLRMKAKEHTANISWAM</sequence>
<gene>
    <name evidence="1" type="primary">alx1</name>
    <name evidence="1" type="synonym">cart1</name>
    <name evidence="7" type="ORF">si:ch211-154h20.1</name>
    <name evidence="8" type="ORF">si:dkey-66c4.1</name>
</gene>
<comment type="function">
    <text evidence="1 5">Sequence-specific DNA-binding transcription factor that binds palindromic sequences within promoters and may activate or repress the transcription of a subset of genes. Most probably regulates the expression of genes involved in the development of mesenchyme-derived craniofacial structures (By similarity). Required for proper neural crest cell migration into the frontonasal primordia during development (PubMed:23059813).</text>
</comment>
<comment type="subunit">
    <text evidence="2">Binds DNA as a homodimer; required for transcriptional activation.</text>
</comment>
<comment type="subcellular location">
    <subcellularLocation>
        <location evidence="1">Nucleus</location>
    </subcellularLocation>
</comment>
<comment type="developmental stage">
    <text evidence="5">Expression is initially detected at the tailbud stage, immediately after gastrulation, in the cephalic mesoderm. It is maintained in the mesoderm during early stages of development. Expression is initiated in the neural crest by the 5 somites stage, and is restricted to a rostral domain of cranial neural crest. Later during development it is still expressed in specific regions of the neural crest-derived facial mesenchyme. In 24 hpf stage embryos, expressed strongly in the periocular mesenchyme. By 48 hpf, expression is maintained in the periocular mesenchyme towards the anterior of the head, with weaker expression in the nasal region and the prospective palate. Also expressed in a discrete region at the distal tip of the mandible arch and in the pectoral fin bud primordia.</text>
</comment>
<comment type="domain">
    <text evidence="2">The OAR motif may negatively regulate DNA-binding and therefore transcriptional activity. It is found in the C-terminal transactivation domain that stimulates transcription.</text>
</comment>
<comment type="disruption phenotype">
    <text evidence="5">Morpholino-mediated knockdown causes severe craniofacial alterations including small, misshapen head, microphthalmia and loss of the jaw. It is associated with a more or less severe loss of the cartilaginous facial skeleton. Pericardial edema is also detected.</text>
</comment>
<comment type="similarity">
    <text evidence="6">Belongs to the paired homeobox family.</text>
</comment>
<dbReference type="EMBL" id="BX000347">
    <property type="protein sequence ID" value="CAK11128.1"/>
    <property type="molecule type" value="Genomic_DNA"/>
</dbReference>
<dbReference type="EMBL" id="BX649507">
    <property type="status" value="NOT_ANNOTATED_CDS"/>
    <property type="molecule type" value="Genomic_DNA"/>
</dbReference>
<dbReference type="RefSeq" id="NP_001038539.1">
    <property type="nucleotide sequence ID" value="NM_001045074.1"/>
</dbReference>
<dbReference type="SMR" id="Q1LVQ7"/>
<dbReference type="FunCoup" id="Q1LVQ7">
    <property type="interactions" value="29"/>
</dbReference>
<dbReference type="STRING" id="7955.ENSDARP00000123391"/>
<dbReference type="PaxDb" id="7955-ENSDARP00000123391"/>
<dbReference type="Ensembl" id="ENSDART00000142584">
    <property type="protein sequence ID" value="ENSDARP00000123391"/>
    <property type="gene ID" value="ENSDARG00000062824"/>
</dbReference>
<dbReference type="Ensembl" id="ENSDART00000184539">
    <property type="protein sequence ID" value="ENSDARP00000150329"/>
    <property type="gene ID" value="ENSDARG00000110530"/>
</dbReference>
<dbReference type="Ensembl" id="ENSDART00000184848">
    <property type="protein sequence ID" value="ENSDARP00000148539"/>
    <property type="gene ID" value="ENSDARG00000115230"/>
</dbReference>
<dbReference type="GeneID" id="565176"/>
<dbReference type="KEGG" id="dre:565176"/>
<dbReference type="AGR" id="ZFIN:ZDB-GENE-050419-191"/>
<dbReference type="CTD" id="8092"/>
<dbReference type="ZFIN" id="ZDB-GENE-050419-191">
    <property type="gene designation" value="alx1"/>
</dbReference>
<dbReference type="eggNOG" id="KOG0490">
    <property type="taxonomic scope" value="Eukaryota"/>
</dbReference>
<dbReference type="HOGENOM" id="CLU_047013_0_1_1"/>
<dbReference type="InParanoid" id="Q1LVQ7"/>
<dbReference type="OMA" id="SSPCGDQ"/>
<dbReference type="OrthoDB" id="6159439at2759"/>
<dbReference type="PhylomeDB" id="Q1LVQ7"/>
<dbReference type="PRO" id="PR:Q1LVQ7"/>
<dbReference type="Proteomes" id="UP000000437">
    <property type="component" value="Alternate scaffold 18"/>
</dbReference>
<dbReference type="Proteomes" id="UP000000437">
    <property type="component" value="Chromosome 18"/>
</dbReference>
<dbReference type="Bgee" id="ENSDARG00000062824">
    <property type="expression patterns" value="Expressed in camera-type eye and 5 other cell types or tissues"/>
</dbReference>
<dbReference type="GO" id="GO:0005634">
    <property type="term" value="C:nucleus"/>
    <property type="evidence" value="ECO:0000250"/>
    <property type="project" value="UniProtKB"/>
</dbReference>
<dbReference type="GO" id="GO:0001228">
    <property type="term" value="F:DNA-binding transcription activator activity, RNA polymerase II-specific"/>
    <property type="evidence" value="ECO:0000318"/>
    <property type="project" value="GO_Central"/>
</dbReference>
<dbReference type="GO" id="GO:0000977">
    <property type="term" value="F:RNA polymerase II transcription regulatory region sequence-specific DNA binding"/>
    <property type="evidence" value="ECO:0000318"/>
    <property type="project" value="GO_Central"/>
</dbReference>
<dbReference type="GO" id="GO:0048593">
    <property type="term" value="P:camera-type eye morphogenesis"/>
    <property type="evidence" value="ECO:0000315"/>
    <property type="project" value="ZFIN"/>
</dbReference>
<dbReference type="GO" id="GO:0048701">
    <property type="term" value="P:embryonic cranial skeleton morphogenesis"/>
    <property type="evidence" value="ECO:0000315"/>
    <property type="project" value="ZFIN"/>
</dbReference>
<dbReference type="GO" id="GO:0048702">
    <property type="term" value="P:embryonic neurocranium morphogenesis"/>
    <property type="evidence" value="ECO:0000315"/>
    <property type="project" value="ZFIN"/>
</dbReference>
<dbReference type="GO" id="GO:0048704">
    <property type="term" value="P:embryonic skeletal system morphogenesis"/>
    <property type="evidence" value="ECO:0000318"/>
    <property type="project" value="GO_Central"/>
</dbReference>
<dbReference type="GO" id="GO:0045892">
    <property type="term" value="P:negative regulation of DNA-templated transcription"/>
    <property type="evidence" value="ECO:0000318"/>
    <property type="project" value="GO_Central"/>
</dbReference>
<dbReference type="GO" id="GO:0001755">
    <property type="term" value="P:neural crest cell migration"/>
    <property type="evidence" value="ECO:0000315"/>
    <property type="project" value="ZFIN"/>
</dbReference>
<dbReference type="GO" id="GO:0045893">
    <property type="term" value="P:positive regulation of DNA-templated transcription"/>
    <property type="evidence" value="ECO:0000250"/>
    <property type="project" value="UniProtKB"/>
</dbReference>
<dbReference type="GO" id="GO:0010718">
    <property type="term" value="P:positive regulation of epithelial to mesenchymal transition"/>
    <property type="evidence" value="ECO:0000250"/>
    <property type="project" value="UniProtKB"/>
</dbReference>
<dbReference type="GO" id="GO:0045944">
    <property type="term" value="P:positive regulation of transcription by RNA polymerase II"/>
    <property type="evidence" value="ECO:0000318"/>
    <property type="project" value="GO_Central"/>
</dbReference>
<dbReference type="CDD" id="cd00086">
    <property type="entry name" value="homeodomain"/>
    <property type="match status" value="1"/>
</dbReference>
<dbReference type="FunFam" id="1.10.10.60:FF:000093">
    <property type="entry name" value="ALX homeobox protein 1"/>
    <property type="match status" value="1"/>
</dbReference>
<dbReference type="Gene3D" id="1.10.10.60">
    <property type="entry name" value="Homeodomain-like"/>
    <property type="match status" value="1"/>
</dbReference>
<dbReference type="InterPro" id="IPR001356">
    <property type="entry name" value="HD"/>
</dbReference>
<dbReference type="InterPro" id="IPR017970">
    <property type="entry name" value="Homeobox_CS"/>
</dbReference>
<dbReference type="InterPro" id="IPR009057">
    <property type="entry name" value="Homeodomain-like_sf"/>
</dbReference>
<dbReference type="InterPro" id="IPR003654">
    <property type="entry name" value="OAR_dom"/>
</dbReference>
<dbReference type="InterPro" id="IPR050649">
    <property type="entry name" value="Paired_Homeobox_TFs"/>
</dbReference>
<dbReference type="PANTHER" id="PTHR24329:SF359">
    <property type="entry name" value="ALX HOMEOBOX PROTEIN 1"/>
    <property type="match status" value="1"/>
</dbReference>
<dbReference type="PANTHER" id="PTHR24329">
    <property type="entry name" value="HOMEOBOX PROTEIN ARISTALESS"/>
    <property type="match status" value="1"/>
</dbReference>
<dbReference type="Pfam" id="PF00046">
    <property type="entry name" value="Homeodomain"/>
    <property type="match status" value="1"/>
</dbReference>
<dbReference type="Pfam" id="PF03826">
    <property type="entry name" value="OAR"/>
    <property type="match status" value="1"/>
</dbReference>
<dbReference type="SMART" id="SM00389">
    <property type="entry name" value="HOX"/>
    <property type="match status" value="1"/>
</dbReference>
<dbReference type="SUPFAM" id="SSF46689">
    <property type="entry name" value="Homeodomain-like"/>
    <property type="match status" value="1"/>
</dbReference>
<dbReference type="PROSITE" id="PS00027">
    <property type="entry name" value="HOMEOBOX_1"/>
    <property type="match status" value="1"/>
</dbReference>
<dbReference type="PROSITE" id="PS50071">
    <property type="entry name" value="HOMEOBOX_2"/>
    <property type="match status" value="1"/>
</dbReference>
<dbReference type="PROSITE" id="PS50803">
    <property type="entry name" value="OAR"/>
    <property type="match status" value="1"/>
</dbReference>
<keyword id="KW-0010">Activator</keyword>
<keyword id="KW-0217">Developmental protein</keyword>
<keyword id="KW-0238">DNA-binding</keyword>
<keyword id="KW-0371">Homeobox</keyword>
<keyword id="KW-0539">Nucleus</keyword>
<keyword id="KW-1185">Reference proteome</keyword>
<keyword id="KW-0678">Repressor</keyword>
<keyword id="KW-0804">Transcription</keyword>
<keyword id="KW-0805">Transcription regulation</keyword>
<organism>
    <name type="scientific">Danio rerio</name>
    <name type="common">Zebrafish</name>
    <name type="synonym">Brachydanio rerio</name>
    <dbReference type="NCBI Taxonomy" id="7955"/>
    <lineage>
        <taxon>Eukaryota</taxon>
        <taxon>Metazoa</taxon>
        <taxon>Chordata</taxon>
        <taxon>Craniata</taxon>
        <taxon>Vertebrata</taxon>
        <taxon>Euteleostomi</taxon>
        <taxon>Actinopterygii</taxon>
        <taxon>Neopterygii</taxon>
        <taxon>Teleostei</taxon>
        <taxon>Ostariophysi</taxon>
        <taxon>Cypriniformes</taxon>
        <taxon>Danionidae</taxon>
        <taxon>Danioninae</taxon>
        <taxon>Danio</taxon>
    </lineage>
</organism>
<reference key="1">
    <citation type="journal article" date="2013" name="Nature">
        <title>The zebrafish reference genome sequence and its relationship to the human genome.</title>
        <authorList>
            <person name="Howe K."/>
            <person name="Clark M.D."/>
            <person name="Torroja C.F."/>
            <person name="Torrance J."/>
            <person name="Berthelot C."/>
            <person name="Muffato M."/>
            <person name="Collins J.E."/>
            <person name="Humphray S."/>
            <person name="McLaren K."/>
            <person name="Matthews L."/>
            <person name="McLaren S."/>
            <person name="Sealy I."/>
            <person name="Caccamo M."/>
            <person name="Churcher C."/>
            <person name="Scott C."/>
            <person name="Barrett J.C."/>
            <person name="Koch R."/>
            <person name="Rauch G.J."/>
            <person name="White S."/>
            <person name="Chow W."/>
            <person name="Kilian B."/>
            <person name="Quintais L.T."/>
            <person name="Guerra-Assuncao J.A."/>
            <person name="Zhou Y."/>
            <person name="Gu Y."/>
            <person name="Yen J."/>
            <person name="Vogel J.H."/>
            <person name="Eyre T."/>
            <person name="Redmond S."/>
            <person name="Banerjee R."/>
            <person name="Chi J."/>
            <person name="Fu B."/>
            <person name="Langley E."/>
            <person name="Maguire S.F."/>
            <person name="Laird G.K."/>
            <person name="Lloyd D."/>
            <person name="Kenyon E."/>
            <person name="Donaldson S."/>
            <person name="Sehra H."/>
            <person name="Almeida-King J."/>
            <person name="Loveland J."/>
            <person name="Trevanion S."/>
            <person name="Jones M."/>
            <person name="Quail M."/>
            <person name="Willey D."/>
            <person name="Hunt A."/>
            <person name="Burton J."/>
            <person name="Sims S."/>
            <person name="McLay K."/>
            <person name="Plumb B."/>
            <person name="Davis J."/>
            <person name="Clee C."/>
            <person name="Oliver K."/>
            <person name="Clark R."/>
            <person name="Riddle C."/>
            <person name="Elliot D."/>
            <person name="Threadgold G."/>
            <person name="Harden G."/>
            <person name="Ware D."/>
            <person name="Begum S."/>
            <person name="Mortimore B."/>
            <person name="Kerry G."/>
            <person name="Heath P."/>
            <person name="Phillimore B."/>
            <person name="Tracey A."/>
            <person name="Corby N."/>
            <person name="Dunn M."/>
            <person name="Johnson C."/>
            <person name="Wood J."/>
            <person name="Clark S."/>
            <person name="Pelan S."/>
            <person name="Griffiths G."/>
            <person name="Smith M."/>
            <person name="Glithero R."/>
            <person name="Howden P."/>
            <person name="Barker N."/>
            <person name="Lloyd C."/>
            <person name="Stevens C."/>
            <person name="Harley J."/>
            <person name="Holt K."/>
            <person name="Panagiotidis G."/>
            <person name="Lovell J."/>
            <person name="Beasley H."/>
            <person name="Henderson C."/>
            <person name="Gordon D."/>
            <person name="Auger K."/>
            <person name="Wright D."/>
            <person name="Collins J."/>
            <person name="Raisen C."/>
            <person name="Dyer L."/>
            <person name="Leung K."/>
            <person name="Robertson L."/>
            <person name="Ambridge K."/>
            <person name="Leongamornlert D."/>
            <person name="McGuire S."/>
            <person name="Gilderthorp R."/>
            <person name="Griffiths C."/>
            <person name="Manthravadi D."/>
            <person name="Nichol S."/>
            <person name="Barker G."/>
            <person name="Whitehead S."/>
            <person name="Kay M."/>
            <person name="Brown J."/>
            <person name="Murnane C."/>
            <person name="Gray E."/>
            <person name="Humphries M."/>
            <person name="Sycamore N."/>
            <person name="Barker D."/>
            <person name="Saunders D."/>
            <person name="Wallis J."/>
            <person name="Babbage A."/>
            <person name="Hammond S."/>
            <person name="Mashreghi-Mohammadi M."/>
            <person name="Barr L."/>
            <person name="Martin S."/>
            <person name="Wray P."/>
            <person name="Ellington A."/>
            <person name="Matthews N."/>
            <person name="Ellwood M."/>
            <person name="Woodmansey R."/>
            <person name="Clark G."/>
            <person name="Cooper J."/>
            <person name="Tromans A."/>
            <person name="Grafham D."/>
            <person name="Skuce C."/>
            <person name="Pandian R."/>
            <person name="Andrews R."/>
            <person name="Harrison E."/>
            <person name="Kimberley A."/>
            <person name="Garnett J."/>
            <person name="Fosker N."/>
            <person name="Hall R."/>
            <person name="Garner P."/>
            <person name="Kelly D."/>
            <person name="Bird C."/>
            <person name="Palmer S."/>
            <person name="Gehring I."/>
            <person name="Berger A."/>
            <person name="Dooley C.M."/>
            <person name="Ersan-Urun Z."/>
            <person name="Eser C."/>
            <person name="Geiger H."/>
            <person name="Geisler M."/>
            <person name="Karotki L."/>
            <person name="Kirn A."/>
            <person name="Konantz J."/>
            <person name="Konantz M."/>
            <person name="Oberlander M."/>
            <person name="Rudolph-Geiger S."/>
            <person name="Teucke M."/>
            <person name="Lanz C."/>
            <person name="Raddatz G."/>
            <person name="Osoegawa K."/>
            <person name="Zhu B."/>
            <person name="Rapp A."/>
            <person name="Widaa S."/>
            <person name="Langford C."/>
            <person name="Yang F."/>
            <person name="Schuster S.C."/>
            <person name="Carter N.P."/>
            <person name="Harrow J."/>
            <person name="Ning Z."/>
            <person name="Herrero J."/>
            <person name="Searle S.M."/>
            <person name="Enright A."/>
            <person name="Geisler R."/>
            <person name="Plasterk R.H."/>
            <person name="Lee C."/>
            <person name="Westerfield M."/>
            <person name="de Jong P.J."/>
            <person name="Zon L.I."/>
            <person name="Postlethwait J.H."/>
            <person name="Nusslein-Volhard C."/>
            <person name="Hubbard T.J."/>
            <person name="Roest Crollius H."/>
            <person name="Rogers J."/>
            <person name="Stemple D.L."/>
        </authorList>
    </citation>
    <scope>NUCLEOTIDE SEQUENCE [LARGE SCALE GENOMIC DNA]</scope>
    <source>
        <strain>Tuebingen</strain>
    </source>
</reference>
<reference key="2">
    <citation type="journal article" date="2013" name="Hum. Mol. Genet.">
        <title>Defective neural crest migration revealed by a Zebrafish model of Alx1-related frontonasal dysplasia.</title>
        <authorList>
            <person name="Dee C.T."/>
            <person name="Szymoniuk C.R."/>
            <person name="Mills P.E."/>
            <person name="Takahashi T."/>
        </authorList>
    </citation>
    <scope>FUNCTION</scope>
    <scope>DISRUPTION PHENOTYPE</scope>
    <scope>DEVELOPMENTAL STAGE</scope>
</reference>
<proteinExistence type="evidence at transcript level"/>
<evidence type="ECO:0000250" key="1">
    <source>
        <dbReference type="UniProtKB" id="Q15699"/>
    </source>
</evidence>
<evidence type="ECO:0000250" key="2">
    <source>
        <dbReference type="UniProtKB" id="Q63087"/>
    </source>
</evidence>
<evidence type="ECO:0000255" key="3">
    <source>
        <dbReference type="PROSITE-ProRule" id="PRU00108"/>
    </source>
</evidence>
<evidence type="ECO:0000255" key="4">
    <source>
        <dbReference type="PROSITE-ProRule" id="PRU00138"/>
    </source>
</evidence>
<evidence type="ECO:0000269" key="5">
    <source>
    </source>
</evidence>
<evidence type="ECO:0000305" key="6"/>
<evidence type="ECO:0000312" key="7">
    <source>
        <dbReference type="EMBL" id="BX649507"/>
    </source>
</evidence>
<evidence type="ECO:0000312" key="8">
    <source>
        <dbReference type="EMBL" id="CAK11128.1"/>
    </source>
</evidence>
<protein>
    <recommendedName>
        <fullName evidence="6">ALX homeobox protein 1</fullName>
    </recommendedName>
    <alternativeName>
        <fullName evidence="2">Cartilage homeoprotein 1</fullName>
        <shortName evidence="2">CART-1</shortName>
    </alternativeName>
</protein>